<accession>A9R2X1</accession>
<reference key="1">
    <citation type="journal article" date="2010" name="J. Bacteriol.">
        <title>Genome sequence of the deep-rooted Yersinia pestis strain Angola reveals new insights into the evolution and pangenome of the plague bacterium.</title>
        <authorList>
            <person name="Eppinger M."/>
            <person name="Worsham P.L."/>
            <person name="Nikolich M.P."/>
            <person name="Riley D.R."/>
            <person name="Sebastian Y."/>
            <person name="Mou S."/>
            <person name="Achtman M."/>
            <person name="Lindler L.E."/>
            <person name="Ravel J."/>
        </authorList>
    </citation>
    <scope>NUCLEOTIDE SEQUENCE [LARGE SCALE GENOMIC DNA]</scope>
    <source>
        <strain>Angola</strain>
    </source>
</reference>
<dbReference type="EC" id="2.7.2.11" evidence="1"/>
<dbReference type="EMBL" id="CP000901">
    <property type="protein sequence ID" value="ABX87603.1"/>
    <property type="molecule type" value="Genomic_DNA"/>
</dbReference>
<dbReference type="RefSeq" id="WP_002208701.1">
    <property type="nucleotide sequence ID" value="NZ_CP009935.1"/>
</dbReference>
<dbReference type="SMR" id="A9R2X1"/>
<dbReference type="GeneID" id="57975496"/>
<dbReference type="KEGG" id="ypg:YpAngola_A3301"/>
<dbReference type="PATRIC" id="fig|349746.12.peg.4368"/>
<dbReference type="UniPathway" id="UPA00098">
    <property type="reaction ID" value="UER00359"/>
</dbReference>
<dbReference type="GO" id="GO:0005829">
    <property type="term" value="C:cytosol"/>
    <property type="evidence" value="ECO:0007669"/>
    <property type="project" value="TreeGrafter"/>
</dbReference>
<dbReference type="GO" id="GO:0005524">
    <property type="term" value="F:ATP binding"/>
    <property type="evidence" value="ECO:0007669"/>
    <property type="project" value="UniProtKB-KW"/>
</dbReference>
<dbReference type="GO" id="GO:0004349">
    <property type="term" value="F:glutamate 5-kinase activity"/>
    <property type="evidence" value="ECO:0007669"/>
    <property type="project" value="UniProtKB-UniRule"/>
</dbReference>
<dbReference type="GO" id="GO:0003723">
    <property type="term" value="F:RNA binding"/>
    <property type="evidence" value="ECO:0007669"/>
    <property type="project" value="InterPro"/>
</dbReference>
<dbReference type="GO" id="GO:0055129">
    <property type="term" value="P:L-proline biosynthetic process"/>
    <property type="evidence" value="ECO:0007669"/>
    <property type="project" value="UniProtKB-UniRule"/>
</dbReference>
<dbReference type="CDD" id="cd04242">
    <property type="entry name" value="AAK_G5K_ProB"/>
    <property type="match status" value="1"/>
</dbReference>
<dbReference type="CDD" id="cd21157">
    <property type="entry name" value="PUA_G5K"/>
    <property type="match status" value="1"/>
</dbReference>
<dbReference type="FunFam" id="2.30.130.10:FF:000003">
    <property type="entry name" value="Glutamate 5-kinase"/>
    <property type="match status" value="1"/>
</dbReference>
<dbReference type="FunFam" id="3.40.1160.10:FF:000006">
    <property type="entry name" value="Glutamate 5-kinase"/>
    <property type="match status" value="1"/>
</dbReference>
<dbReference type="Gene3D" id="3.40.1160.10">
    <property type="entry name" value="Acetylglutamate kinase-like"/>
    <property type="match status" value="2"/>
</dbReference>
<dbReference type="Gene3D" id="2.30.130.10">
    <property type="entry name" value="PUA domain"/>
    <property type="match status" value="1"/>
</dbReference>
<dbReference type="HAMAP" id="MF_00456">
    <property type="entry name" value="ProB"/>
    <property type="match status" value="1"/>
</dbReference>
<dbReference type="InterPro" id="IPR036393">
    <property type="entry name" value="AceGlu_kinase-like_sf"/>
</dbReference>
<dbReference type="InterPro" id="IPR001048">
    <property type="entry name" value="Asp/Glu/Uridylate_kinase"/>
</dbReference>
<dbReference type="InterPro" id="IPR041739">
    <property type="entry name" value="G5K_ProB"/>
</dbReference>
<dbReference type="InterPro" id="IPR001057">
    <property type="entry name" value="Glu/AcGlu_kinase"/>
</dbReference>
<dbReference type="InterPro" id="IPR011529">
    <property type="entry name" value="Glu_5kinase"/>
</dbReference>
<dbReference type="InterPro" id="IPR005715">
    <property type="entry name" value="Glu_5kinase/COase_Synthase"/>
</dbReference>
<dbReference type="InterPro" id="IPR019797">
    <property type="entry name" value="Glutamate_5-kinase_CS"/>
</dbReference>
<dbReference type="InterPro" id="IPR002478">
    <property type="entry name" value="PUA"/>
</dbReference>
<dbReference type="InterPro" id="IPR015947">
    <property type="entry name" value="PUA-like_sf"/>
</dbReference>
<dbReference type="InterPro" id="IPR036974">
    <property type="entry name" value="PUA_sf"/>
</dbReference>
<dbReference type="NCBIfam" id="TIGR01027">
    <property type="entry name" value="proB"/>
    <property type="match status" value="1"/>
</dbReference>
<dbReference type="PANTHER" id="PTHR43654">
    <property type="entry name" value="GLUTAMATE 5-KINASE"/>
    <property type="match status" value="1"/>
</dbReference>
<dbReference type="PANTHER" id="PTHR43654:SF1">
    <property type="entry name" value="ISOPENTENYL PHOSPHATE KINASE"/>
    <property type="match status" value="1"/>
</dbReference>
<dbReference type="Pfam" id="PF00696">
    <property type="entry name" value="AA_kinase"/>
    <property type="match status" value="1"/>
</dbReference>
<dbReference type="Pfam" id="PF01472">
    <property type="entry name" value="PUA"/>
    <property type="match status" value="1"/>
</dbReference>
<dbReference type="PIRSF" id="PIRSF000729">
    <property type="entry name" value="GK"/>
    <property type="match status" value="1"/>
</dbReference>
<dbReference type="PRINTS" id="PR00474">
    <property type="entry name" value="GLU5KINASE"/>
</dbReference>
<dbReference type="SMART" id="SM00359">
    <property type="entry name" value="PUA"/>
    <property type="match status" value="1"/>
</dbReference>
<dbReference type="SUPFAM" id="SSF53633">
    <property type="entry name" value="Carbamate kinase-like"/>
    <property type="match status" value="1"/>
</dbReference>
<dbReference type="SUPFAM" id="SSF88697">
    <property type="entry name" value="PUA domain-like"/>
    <property type="match status" value="1"/>
</dbReference>
<dbReference type="PROSITE" id="PS00902">
    <property type="entry name" value="GLUTAMATE_5_KINASE"/>
    <property type="match status" value="1"/>
</dbReference>
<dbReference type="PROSITE" id="PS50890">
    <property type="entry name" value="PUA"/>
    <property type="match status" value="1"/>
</dbReference>
<evidence type="ECO:0000255" key="1">
    <source>
        <dbReference type="HAMAP-Rule" id="MF_00456"/>
    </source>
</evidence>
<comment type="function">
    <text evidence="1">Catalyzes the transfer of a phosphate group to glutamate to form L-glutamate 5-phosphate.</text>
</comment>
<comment type="catalytic activity">
    <reaction evidence="1">
        <text>L-glutamate + ATP = L-glutamyl 5-phosphate + ADP</text>
        <dbReference type="Rhea" id="RHEA:14877"/>
        <dbReference type="ChEBI" id="CHEBI:29985"/>
        <dbReference type="ChEBI" id="CHEBI:30616"/>
        <dbReference type="ChEBI" id="CHEBI:58274"/>
        <dbReference type="ChEBI" id="CHEBI:456216"/>
        <dbReference type="EC" id="2.7.2.11"/>
    </reaction>
</comment>
<comment type="pathway">
    <text evidence="1">Amino-acid biosynthesis; L-proline biosynthesis; L-glutamate 5-semialdehyde from L-glutamate: step 1/2.</text>
</comment>
<comment type="subcellular location">
    <subcellularLocation>
        <location evidence="1">Cytoplasm</location>
    </subcellularLocation>
</comment>
<comment type="similarity">
    <text evidence="1">Belongs to the glutamate 5-kinase family.</text>
</comment>
<name>PROB_YERPG</name>
<gene>
    <name evidence="1" type="primary">proB</name>
    <name type="ordered locus">YpAngola_A3301</name>
</gene>
<organism>
    <name type="scientific">Yersinia pestis bv. Antiqua (strain Angola)</name>
    <dbReference type="NCBI Taxonomy" id="349746"/>
    <lineage>
        <taxon>Bacteria</taxon>
        <taxon>Pseudomonadati</taxon>
        <taxon>Pseudomonadota</taxon>
        <taxon>Gammaproteobacteria</taxon>
        <taxon>Enterobacterales</taxon>
        <taxon>Yersiniaceae</taxon>
        <taxon>Yersinia</taxon>
    </lineage>
</organism>
<protein>
    <recommendedName>
        <fullName evidence="1">Glutamate 5-kinase</fullName>
        <ecNumber evidence="1">2.7.2.11</ecNumber>
    </recommendedName>
    <alternativeName>
        <fullName evidence="1">Gamma-glutamyl kinase</fullName>
        <shortName evidence="1">GK</shortName>
    </alternativeName>
</protein>
<feature type="chain" id="PRO_1000193718" description="Glutamate 5-kinase">
    <location>
        <begin position="1"/>
        <end position="367"/>
    </location>
</feature>
<feature type="domain" description="PUA" evidence="1">
    <location>
        <begin position="275"/>
        <end position="353"/>
    </location>
</feature>
<feature type="binding site" evidence="1">
    <location>
        <position position="10"/>
    </location>
    <ligand>
        <name>ATP</name>
        <dbReference type="ChEBI" id="CHEBI:30616"/>
    </ligand>
</feature>
<feature type="binding site" evidence="1">
    <location>
        <position position="50"/>
    </location>
    <ligand>
        <name>substrate</name>
    </ligand>
</feature>
<feature type="binding site" evidence="1">
    <location>
        <position position="137"/>
    </location>
    <ligand>
        <name>substrate</name>
    </ligand>
</feature>
<feature type="binding site" evidence="1">
    <location>
        <position position="149"/>
    </location>
    <ligand>
        <name>substrate</name>
    </ligand>
</feature>
<feature type="binding site" evidence="1">
    <location>
        <begin position="169"/>
        <end position="170"/>
    </location>
    <ligand>
        <name>ATP</name>
        <dbReference type="ChEBI" id="CHEBI:30616"/>
    </ligand>
</feature>
<feature type="binding site" evidence="1">
    <location>
        <begin position="211"/>
        <end position="217"/>
    </location>
    <ligand>
        <name>ATP</name>
        <dbReference type="ChEBI" id="CHEBI:30616"/>
    </ligand>
</feature>
<sequence>MSGSQTLVVKLGTSVLTGGSRRLNRAHIVELVRQCAQQHAKGHRIVIVTSGAIAAGREHLGYPELPATIASKQLLAAVGQSRLIQLWEQLFSIYGIHIGQMLLTRADLEDRERFLNARDTMNALLDNRIVPVINENDAVATAEIKVGDNDNLSALAAILASADKLLLLTDQAGLYTADPRNNPEAELIREVHGIDDVLRGMAGDSVSGLGTGGMATKLQAADVACRAGIDVVIAAGSQVGVIADVIDGTPVGTRFHSLETPLENRKRWIFGAPPAGEITVDDGAVFAIMERGSSLLPKGIRSVKGDFSRGEVIRIRNLNGRDLAHGVSRYNSDALRMLAGHHSQQISEILGYEYGPVAVHRDDMIVS</sequence>
<proteinExistence type="inferred from homology"/>
<keyword id="KW-0028">Amino-acid biosynthesis</keyword>
<keyword id="KW-0067">ATP-binding</keyword>
<keyword id="KW-0963">Cytoplasm</keyword>
<keyword id="KW-0418">Kinase</keyword>
<keyword id="KW-0547">Nucleotide-binding</keyword>
<keyword id="KW-0641">Proline biosynthesis</keyword>
<keyword id="KW-0808">Transferase</keyword>